<reference key="1">
    <citation type="journal article" date="2009" name="BMC Genomics">
        <title>Conservation in the face of diversity: multistrain analysis of an intracellular bacterium.</title>
        <authorList>
            <person name="Dark M.J."/>
            <person name="Herndon D.R."/>
            <person name="Kappmeyer L.S."/>
            <person name="Gonzales M.P."/>
            <person name="Nordeen E."/>
            <person name="Palmer G.H."/>
            <person name="Knowles D.P. Jr."/>
            <person name="Brayton K.A."/>
        </authorList>
    </citation>
    <scope>NUCLEOTIDE SEQUENCE [LARGE SCALE GENOMIC DNA]</scope>
    <source>
        <strain>Florida</strain>
    </source>
</reference>
<proteinExistence type="inferred from homology"/>
<organism>
    <name type="scientific">Anaplasma marginale (strain Florida)</name>
    <dbReference type="NCBI Taxonomy" id="320483"/>
    <lineage>
        <taxon>Bacteria</taxon>
        <taxon>Pseudomonadati</taxon>
        <taxon>Pseudomonadota</taxon>
        <taxon>Alphaproteobacteria</taxon>
        <taxon>Rickettsiales</taxon>
        <taxon>Anaplasmataceae</taxon>
        <taxon>Anaplasma</taxon>
    </lineage>
</organism>
<dbReference type="EC" id="2.7.8.7" evidence="1"/>
<dbReference type="EMBL" id="CP001079">
    <property type="protein sequence ID" value="ACM49240.1"/>
    <property type="molecule type" value="Genomic_DNA"/>
</dbReference>
<dbReference type="RefSeq" id="WP_010264187.1">
    <property type="nucleotide sequence ID" value="NZ_AFMS01000001.1"/>
</dbReference>
<dbReference type="SMR" id="B9KIC8"/>
<dbReference type="STRING" id="320483.AMF_375"/>
<dbReference type="GeneID" id="7398241"/>
<dbReference type="KEGG" id="amf:AMF_375"/>
<dbReference type="PATRIC" id="fig|320483.3.peg.437"/>
<dbReference type="eggNOG" id="COG0736">
    <property type="taxonomic scope" value="Bacteria"/>
</dbReference>
<dbReference type="HOGENOM" id="CLU_089696_3_1_5"/>
<dbReference type="Proteomes" id="UP000007307">
    <property type="component" value="Chromosome"/>
</dbReference>
<dbReference type="GO" id="GO:0005737">
    <property type="term" value="C:cytoplasm"/>
    <property type="evidence" value="ECO:0007669"/>
    <property type="project" value="UniProtKB-SubCell"/>
</dbReference>
<dbReference type="GO" id="GO:0008897">
    <property type="term" value="F:holo-[acyl-carrier-protein] synthase activity"/>
    <property type="evidence" value="ECO:0007669"/>
    <property type="project" value="UniProtKB-UniRule"/>
</dbReference>
<dbReference type="GO" id="GO:0000287">
    <property type="term" value="F:magnesium ion binding"/>
    <property type="evidence" value="ECO:0007669"/>
    <property type="project" value="UniProtKB-UniRule"/>
</dbReference>
<dbReference type="GO" id="GO:0006633">
    <property type="term" value="P:fatty acid biosynthetic process"/>
    <property type="evidence" value="ECO:0007669"/>
    <property type="project" value="UniProtKB-UniRule"/>
</dbReference>
<dbReference type="Gene3D" id="3.90.470.20">
    <property type="entry name" value="4'-phosphopantetheinyl transferase domain"/>
    <property type="match status" value="1"/>
</dbReference>
<dbReference type="HAMAP" id="MF_00101">
    <property type="entry name" value="AcpS"/>
    <property type="match status" value="1"/>
</dbReference>
<dbReference type="InterPro" id="IPR008278">
    <property type="entry name" value="4-PPantetheinyl_Trfase_dom"/>
</dbReference>
<dbReference type="InterPro" id="IPR037143">
    <property type="entry name" value="4-PPantetheinyl_Trfase_dom_sf"/>
</dbReference>
<dbReference type="InterPro" id="IPR002582">
    <property type="entry name" value="ACPS"/>
</dbReference>
<dbReference type="InterPro" id="IPR004568">
    <property type="entry name" value="Ppantetheine-prot_Trfase_dom"/>
</dbReference>
<dbReference type="NCBIfam" id="TIGR00516">
    <property type="entry name" value="acpS"/>
    <property type="match status" value="1"/>
</dbReference>
<dbReference type="NCBIfam" id="TIGR00556">
    <property type="entry name" value="pantethn_trn"/>
    <property type="match status" value="1"/>
</dbReference>
<dbReference type="NCBIfam" id="NF011253">
    <property type="entry name" value="PRK14659.1"/>
    <property type="match status" value="1"/>
</dbReference>
<dbReference type="Pfam" id="PF01648">
    <property type="entry name" value="ACPS"/>
    <property type="match status" value="1"/>
</dbReference>
<dbReference type="SUPFAM" id="SSF56214">
    <property type="entry name" value="4'-phosphopantetheinyl transferase"/>
    <property type="match status" value="1"/>
</dbReference>
<accession>B9KIC8</accession>
<keyword id="KW-0963">Cytoplasm</keyword>
<keyword id="KW-0275">Fatty acid biosynthesis</keyword>
<keyword id="KW-0276">Fatty acid metabolism</keyword>
<keyword id="KW-0444">Lipid biosynthesis</keyword>
<keyword id="KW-0443">Lipid metabolism</keyword>
<keyword id="KW-0460">Magnesium</keyword>
<keyword id="KW-0479">Metal-binding</keyword>
<keyword id="KW-1185">Reference proteome</keyword>
<keyword id="KW-0808">Transferase</keyword>
<feature type="chain" id="PRO_1000118787" description="Holo-[acyl-carrier-protein] synthase">
    <location>
        <begin position="1"/>
        <end position="120"/>
    </location>
</feature>
<feature type="binding site" evidence="1">
    <location>
        <position position="8"/>
    </location>
    <ligand>
        <name>Mg(2+)</name>
        <dbReference type="ChEBI" id="CHEBI:18420"/>
    </ligand>
</feature>
<feature type="binding site" evidence="1">
    <location>
        <position position="60"/>
    </location>
    <ligand>
        <name>Mg(2+)</name>
        <dbReference type="ChEBI" id="CHEBI:18420"/>
    </ligand>
</feature>
<sequence>MIVGIGVDLVSVRRMQQLLERFGNRFTTRAFSEVEIRDSLQYKNAHAVARHFAKRFAAKEAYVKAVGLGFGRGIEMRGVSVFNDALGKPRIAVSGDVGHNVELSLSDDGEYAIAFVVLHV</sequence>
<evidence type="ECO:0000255" key="1">
    <source>
        <dbReference type="HAMAP-Rule" id="MF_00101"/>
    </source>
</evidence>
<gene>
    <name evidence="1" type="primary">acpS</name>
    <name type="ordered locus">AMF_375</name>
</gene>
<comment type="function">
    <text evidence="1">Transfers the 4'-phosphopantetheine moiety from coenzyme A to a Ser of acyl-carrier-protein.</text>
</comment>
<comment type="catalytic activity">
    <reaction evidence="1">
        <text>apo-[ACP] + CoA = holo-[ACP] + adenosine 3',5'-bisphosphate + H(+)</text>
        <dbReference type="Rhea" id="RHEA:12068"/>
        <dbReference type="Rhea" id="RHEA-COMP:9685"/>
        <dbReference type="Rhea" id="RHEA-COMP:9690"/>
        <dbReference type="ChEBI" id="CHEBI:15378"/>
        <dbReference type="ChEBI" id="CHEBI:29999"/>
        <dbReference type="ChEBI" id="CHEBI:57287"/>
        <dbReference type="ChEBI" id="CHEBI:58343"/>
        <dbReference type="ChEBI" id="CHEBI:64479"/>
        <dbReference type="EC" id="2.7.8.7"/>
    </reaction>
</comment>
<comment type="cofactor">
    <cofactor evidence="1">
        <name>Mg(2+)</name>
        <dbReference type="ChEBI" id="CHEBI:18420"/>
    </cofactor>
</comment>
<comment type="subcellular location">
    <subcellularLocation>
        <location evidence="1">Cytoplasm</location>
    </subcellularLocation>
</comment>
<comment type="similarity">
    <text evidence="1">Belongs to the P-Pant transferase superfamily. AcpS family.</text>
</comment>
<protein>
    <recommendedName>
        <fullName evidence="1">Holo-[acyl-carrier-protein] synthase</fullName>
        <shortName evidence="1">Holo-ACP synthase</shortName>
        <ecNumber evidence="1">2.7.8.7</ecNumber>
    </recommendedName>
    <alternativeName>
        <fullName evidence="1">4'-phosphopantetheinyl transferase AcpS</fullName>
    </alternativeName>
</protein>
<name>ACPS_ANAMF</name>